<dbReference type="EC" id="4.1.1.39" evidence="1"/>
<dbReference type="EMBL" id="KP297242">
    <property type="protein sequence ID" value="AJO26095.1"/>
    <property type="molecule type" value="Genomic_DNA"/>
</dbReference>
<dbReference type="EMBL" id="KP297245">
    <property type="protein sequence ID" value="AJO26344.1"/>
    <property type="molecule type" value="Genomic_DNA"/>
</dbReference>
<dbReference type="EMBL" id="KP297243">
    <property type="protein sequence ID" value="AJO26178.1"/>
    <property type="molecule type" value="Genomic_DNA"/>
</dbReference>
<dbReference type="EMBL" id="KR819565">
    <property type="protein sequence ID" value="ANA04970.1"/>
    <property type="molecule type" value="Genomic_DNA"/>
</dbReference>
<dbReference type="EMBL" id="L01882">
    <property type="protein sequence ID" value="AAA84003.2"/>
    <property type="molecule type" value="Genomic_DNA"/>
</dbReference>
<dbReference type="RefSeq" id="YP_009127996.1">
    <property type="nucleotide sequence ID" value="NC_026690.1"/>
</dbReference>
<dbReference type="SMR" id="P28377"/>
<dbReference type="GeneID" id="23763988"/>
<dbReference type="GO" id="GO:0009507">
    <property type="term" value="C:chloroplast"/>
    <property type="evidence" value="ECO:0007669"/>
    <property type="project" value="UniProtKB-SubCell"/>
</dbReference>
<dbReference type="GO" id="GO:0000287">
    <property type="term" value="F:magnesium ion binding"/>
    <property type="evidence" value="ECO:0007669"/>
    <property type="project" value="UniProtKB-UniRule"/>
</dbReference>
<dbReference type="GO" id="GO:0004497">
    <property type="term" value="F:monooxygenase activity"/>
    <property type="evidence" value="ECO:0007669"/>
    <property type="project" value="UniProtKB-KW"/>
</dbReference>
<dbReference type="GO" id="GO:0016984">
    <property type="term" value="F:ribulose-bisphosphate carboxylase activity"/>
    <property type="evidence" value="ECO:0007669"/>
    <property type="project" value="UniProtKB-UniRule"/>
</dbReference>
<dbReference type="GO" id="GO:0009853">
    <property type="term" value="P:photorespiration"/>
    <property type="evidence" value="ECO:0007669"/>
    <property type="project" value="UniProtKB-KW"/>
</dbReference>
<dbReference type="GO" id="GO:0019253">
    <property type="term" value="P:reductive pentose-phosphate cycle"/>
    <property type="evidence" value="ECO:0007669"/>
    <property type="project" value="UniProtKB-UniRule"/>
</dbReference>
<dbReference type="CDD" id="cd08212">
    <property type="entry name" value="RuBisCO_large_I"/>
    <property type="match status" value="1"/>
</dbReference>
<dbReference type="FunFam" id="3.20.20.110:FF:000001">
    <property type="entry name" value="Ribulose bisphosphate carboxylase large chain"/>
    <property type="match status" value="1"/>
</dbReference>
<dbReference type="FunFam" id="3.30.70.150:FF:000001">
    <property type="entry name" value="Ribulose bisphosphate carboxylase large chain"/>
    <property type="match status" value="1"/>
</dbReference>
<dbReference type="Gene3D" id="3.20.20.110">
    <property type="entry name" value="Ribulose bisphosphate carboxylase, large subunit, C-terminal domain"/>
    <property type="match status" value="1"/>
</dbReference>
<dbReference type="Gene3D" id="3.30.70.150">
    <property type="entry name" value="RuBisCO large subunit, N-terminal domain"/>
    <property type="match status" value="1"/>
</dbReference>
<dbReference type="HAMAP" id="MF_01338">
    <property type="entry name" value="RuBisCO_L_type1"/>
    <property type="match status" value="1"/>
</dbReference>
<dbReference type="InterPro" id="IPR033966">
    <property type="entry name" value="RuBisCO"/>
</dbReference>
<dbReference type="InterPro" id="IPR020878">
    <property type="entry name" value="RuBisCo_large_chain_AS"/>
</dbReference>
<dbReference type="InterPro" id="IPR000685">
    <property type="entry name" value="RuBisCO_lsu_C"/>
</dbReference>
<dbReference type="InterPro" id="IPR036376">
    <property type="entry name" value="RuBisCO_lsu_C_sf"/>
</dbReference>
<dbReference type="InterPro" id="IPR017443">
    <property type="entry name" value="RuBisCO_lsu_fd_N"/>
</dbReference>
<dbReference type="InterPro" id="IPR036422">
    <property type="entry name" value="RuBisCO_lsu_N_sf"/>
</dbReference>
<dbReference type="InterPro" id="IPR020888">
    <property type="entry name" value="RuBisCO_lsuI"/>
</dbReference>
<dbReference type="NCBIfam" id="NF003252">
    <property type="entry name" value="PRK04208.1"/>
    <property type="match status" value="1"/>
</dbReference>
<dbReference type="PANTHER" id="PTHR42704">
    <property type="entry name" value="RIBULOSE BISPHOSPHATE CARBOXYLASE"/>
    <property type="match status" value="1"/>
</dbReference>
<dbReference type="PANTHER" id="PTHR42704:SF15">
    <property type="entry name" value="RIBULOSE BISPHOSPHATE CARBOXYLASE LARGE CHAIN"/>
    <property type="match status" value="1"/>
</dbReference>
<dbReference type="Pfam" id="PF00016">
    <property type="entry name" value="RuBisCO_large"/>
    <property type="match status" value="1"/>
</dbReference>
<dbReference type="Pfam" id="PF02788">
    <property type="entry name" value="RuBisCO_large_N"/>
    <property type="match status" value="1"/>
</dbReference>
<dbReference type="SFLD" id="SFLDG01052">
    <property type="entry name" value="RuBisCO"/>
    <property type="match status" value="1"/>
</dbReference>
<dbReference type="SFLD" id="SFLDS00014">
    <property type="entry name" value="RuBisCO"/>
    <property type="match status" value="1"/>
</dbReference>
<dbReference type="SFLD" id="SFLDG00301">
    <property type="entry name" value="RuBisCO-like_proteins"/>
    <property type="match status" value="1"/>
</dbReference>
<dbReference type="SUPFAM" id="SSF51649">
    <property type="entry name" value="RuBisCo, C-terminal domain"/>
    <property type="match status" value="1"/>
</dbReference>
<dbReference type="SUPFAM" id="SSF54966">
    <property type="entry name" value="RuBisCO, large subunit, small (N-terminal) domain"/>
    <property type="match status" value="1"/>
</dbReference>
<dbReference type="PROSITE" id="PS00157">
    <property type="entry name" value="RUBISCO_LARGE"/>
    <property type="match status" value="1"/>
</dbReference>
<feature type="chain" id="PRO_0000062339" description="Ribulose bisphosphate carboxylase large chain">
    <location>
        <begin position="1"/>
        <end position="475"/>
    </location>
</feature>
<feature type="active site" description="Proton acceptor" evidence="1">
    <location>
        <position position="175"/>
    </location>
</feature>
<feature type="active site" description="Proton acceptor" evidence="1">
    <location>
        <position position="294"/>
    </location>
</feature>
<feature type="binding site" description="in homodimeric partner" evidence="1">
    <location>
        <position position="123"/>
    </location>
    <ligand>
        <name>substrate</name>
    </ligand>
</feature>
<feature type="binding site" evidence="1">
    <location>
        <position position="173"/>
    </location>
    <ligand>
        <name>substrate</name>
    </ligand>
</feature>
<feature type="binding site" evidence="1">
    <location>
        <position position="177"/>
    </location>
    <ligand>
        <name>substrate</name>
    </ligand>
</feature>
<feature type="binding site" description="via carbamate group" evidence="1">
    <location>
        <position position="201"/>
    </location>
    <ligand>
        <name>Mg(2+)</name>
        <dbReference type="ChEBI" id="CHEBI:18420"/>
    </ligand>
</feature>
<feature type="binding site" evidence="1">
    <location>
        <position position="203"/>
    </location>
    <ligand>
        <name>Mg(2+)</name>
        <dbReference type="ChEBI" id="CHEBI:18420"/>
    </ligand>
</feature>
<feature type="binding site" evidence="1">
    <location>
        <position position="204"/>
    </location>
    <ligand>
        <name>Mg(2+)</name>
        <dbReference type="ChEBI" id="CHEBI:18420"/>
    </ligand>
</feature>
<feature type="binding site" evidence="1">
    <location>
        <position position="295"/>
    </location>
    <ligand>
        <name>substrate</name>
    </ligand>
</feature>
<feature type="binding site" evidence="1">
    <location>
        <position position="327"/>
    </location>
    <ligand>
        <name>substrate</name>
    </ligand>
</feature>
<feature type="binding site" evidence="1">
    <location>
        <position position="379"/>
    </location>
    <ligand>
        <name>substrate</name>
    </ligand>
</feature>
<feature type="site" description="Transition state stabilizer" evidence="1">
    <location>
        <position position="334"/>
    </location>
</feature>
<feature type="modified residue" description="N6,N6,N6-trimethyllysine" evidence="1">
    <location>
        <position position="14"/>
    </location>
</feature>
<feature type="modified residue" description="N6-carboxylysine" evidence="1">
    <location>
        <position position="201"/>
    </location>
</feature>
<feature type="disulfide bond" description="Interchain; in linked form" evidence="1">
    <location>
        <position position="247"/>
    </location>
</feature>
<feature type="sequence conflict" description="In Ref. 3; AAA84003." ref="3">
    <original>VAYC</original>
    <variation>AAYV</variation>
    <location>
        <begin position="142"/>
        <end position="145"/>
    </location>
</feature>
<feature type="sequence conflict" description="In Ref. 2; ANA04970." evidence="2" ref="2">
    <original>Q</original>
    <variation>P</variation>
    <location>
        <position position="470"/>
    </location>
</feature>
<evidence type="ECO:0000255" key="1">
    <source>
        <dbReference type="HAMAP-Rule" id="MF_01338"/>
    </source>
</evidence>
<evidence type="ECO:0000305" key="2"/>
<name>RBL_ACTCH</name>
<geneLocation type="chloroplast"/>
<reference key="1">
    <citation type="journal article" date="2015" name="PLoS ONE">
        <title>The first complete chloroplast genome sequences in Actinidiaceae: Genome structure and comparative analysis.</title>
        <authorList>
            <person name="Yao X."/>
            <person name="Tang P."/>
            <person name="Li Z."/>
            <person name="Li D."/>
            <person name="Liu Y."/>
            <person name="Huang H."/>
        </authorList>
    </citation>
    <scope>NUCLEOTIDE SEQUENCE [LARGE SCALE GENOMIC DNA]</scope>
</reference>
<reference key="2">
    <citation type="journal article" date="2015" name="Taxon">
        <title>Molecular phylogenetics and floral evolution in the sarracenioid clade (Actinidiaceae, Roridulaceae and Sarraceniaceae) of Ericales.</title>
        <authorList>
            <person name="Loefstrand S.D."/>
            <person name="Schoenenberger J."/>
        </authorList>
    </citation>
    <scope>NUCLEOTIDE SEQUENCE [GENOMIC DNA] OF 6-474</scope>
</reference>
<reference key="3">
    <citation type="journal article" date="1992" name="Science">
        <title>Carnivorous plants: phylogeny and structural evolution.</title>
        <authorList>
            <person name="Albert V.A."/>
            <person name="Williams S.E."/>
            <person name="Chase M.W."/>
        </authorList>
    </citation>
    <scope>NUCLEOTIDE SEQUENCE [GENOMIC DNA] OF 11-475</scope>
</reference>
<protein>
    <recommendedName>
        <fullName evidence="1">Ribulose bisphosphate carboxylase large chain</fullName>
        <shortName evidence="1">RuBisCO large subunit</shortName>
        <ecNumber evidence="1">4.1.1.39</ecNumber>
    </recommendedName>
</protein>
<proteinExistence type="inferred from homology"/>
<gene>
    <name evidence="1" type="primary">rbcL</name>
</gene>
<keyword id="KW-0113">Calvin cycle</keyword>
<keyword id="KW-0120">Carbon dioxide fixation</keyword>
<keyword id="KW-0150">Chloroplast</keyword>
<keyword id="KW-1015">Disulfide bond</keyword>
<keyword id="KW-0456">Lyase</keyword>
<keyword id="KW-0460">Magnesium</keyword>
<keyword id="KW-0479">Metal-binding</keyword>
<keyword id="KW-0488">Methylation</keyword>
<keyword id="KW-0503">Monooxygenase</keyword>
<keyword id="KW-0560">Oxidoreductase</keyword>
<keyword id="KW-0601">Photorespiration</keyword>
<keyword id="KW-0602">Photosynthesis</keyword>
<keyword id="KW-0934">Plastid</keyword>
<organism>
    <name type="scientific">Actinidia chinensis</name>
    <name type="common">Kiwi</name>
    <name type="synonym">Yangtao</name>
    <dbReference type="NCBI Taxonomy" id="3625"/>
    <lineage>
        <taxon>Eukaryota</taxon>
        <taxon>Viridiplantae</taxon>
        <taxon>Streptophyta</taxon>
        <taxon>Embryophyta</taxon>
        <taxon>Tracheophyta</taxon>
        <taxon>Spermatophyta</taxon>
        <taxon>Magnoliopsida</taxon>
        <taxon>eudicotyledons</taxon>
        <taxon>Gunneridae</taxon>
        <taxon>Pentapetalae</taxon>
        <taxon>asterids</taxon>
        <taxon>Ericales</taxon>
        <taxon>Actinidiaceae</taxon>
        <taxon>Actinidia</taxon>
    </lineage>
</organism>
<sequence>MSPQTETKASVGFKAGVKDYKLTYYTPDYETKDTDILAAFRVTPQPGVPPEEAGAAVAAESSTGTWTTVWTDGLTSLDRYKGRCYHIEPVAGEETQFIAYVAYPLDLFEEGSVTNMFTSIVGNVFGFKALRALRLEDLRIPVAYCKTFQGPPHGIQVERDKLNKYGRPLLGCTIKPKLGLSAKNYGRAVYECLRGGLDFTKDDENVNSQPFMRWRDRFLFCAEAIFKAQSETGEIKGHYLNATAGTCEEMMKRAVFARELGVPIVMHDYLTGGFTANTTLAHYCRDNGLLLHIHRAMHAVIDRQKNHGMHFRVLAKALRMSGGDHIHAGTVVGKLEGERDITLGFVDLLRDDYIEKDRARGIYFTQDWVSLPGVLPVASGGIHVWHMPALTEIFGDDSVLQFGGGTLGHPWGNAPGAVANRVALEACVQARNEGRDLAREGNEIIRNASKWSPELAAACEVWKEIKFEFQAMDTL</sequence>
<accession>P28377</accession>
<accession>A0A0C5CXV9</accession>
<accession>A0A166F6H0</accession>
<comment type="function">
    <text evidence="1">RuBisCO catalyzes two reactions: the carboxylation of D-ribulose 1,5-bisphosphate, the primary event in carbon dioxide fixation, as well as the oxidative fragmentation of the pentose substrate in the photorespiration process. Both reactions occur simultaneously and in competition at the same active site.</text>
</comment>
<comment type="catalytic activity">
    <reaction evidence="1">
        <text>2 (2R)-3-phosphoglycerate + 2 H(+) = D-ribulose 1,5-bisphosphate + CO2 + H2O</text>
        <dbReference type="Rhea" id="RHEA:23124"/>
        <dbReference type="ChEBI" id="CHEBI:15377"/>
        <dbReference type="ChEBI" id="CHEBI:15378"/>
        <dbReference type="ChEBI" id="CHEBI:16526"/>
        <dbReference type="ChEBI" id="CHEBI:57870"/>
        <dbReference type="ChEBI" id="CHEBI:58272"/>
        <dbReference type="EC" id="4.1.1.39"/>
    </reaction>
</comment>
<comment type="catalytic activity">
    <reaction evidence="1">
        <text>D-ribulose 1,5-bisphosphate + O2 = 2-phosphoglycolate + (2R)-3-phosphoglycerate + 2 H(+)</text>
        <dbReference type="Rhea" id="RHEA:36631"/>
        <dbReference type="ChEBI" id="CHEBI:15378"/>
        <dbReference type="ChEBI" id="CHEBI:15379"/>
        <dbReference type="ChEBI" id="CHEBI:57870"/>
        <dbReference type="ChEBI" id="CHEBI:58033"/>
        <dbReference type="ChEBI" id="CHEBI:58272"/>
    </reaction>
</comment>
<comment type="cofactor">
    <cofactor evidence="1">
        <name>Mg(2+)</name>
        <dbReference type="ChEBI" id="CHEBI:18420"/>
    </cofactor>
    <text evidence="1">Binds 1 Mg(2+) ion per subunit.</text>
</comment>
<comment type="subunit">
    <text evidence="1">Heterohexadecamer of 8 large chains and 8 small chains; disulfide-linked. The disulfide link is formed within the large subunit homodimers.</text>
</comment>
<comment type="subcellular location">
    <subcellularLocation>
        <location>Plastid</location>
        <location>Chloroplast</location>
    </subcellularLocation>
</comment>
<comment type="PTM">
    <text evidence="1">The disulfide bond which can form in the large chain dimeric partners within the hexadecamer appears to be associated with oxidative stress and protein turnover.</text>
</comment>
<comment type="miscellaneous">
    <text evidence="1">The basic functional RuBisCO is composed of a large chain homodimer in a 'head-to-tail' conformation. In form I RuBisCO this homodimer is arranged in a barrel-like tetramer with the small subunits forming a tetrameric 'cap' on each end of the 'barrel'.</text>
</comment>
<comment type="similarity">
    <text evidence="1">Belongs to the RuBisCO large chain family. Type I subfamily.</text>
</comment>